<reference key="1">
    <citation type="journal article" date="2003" name="Proc. Natl. Acad. Sci. U.S.A.">
        <title>Reductive genome evolution in Buchnera aphidicola.</title>
        <authorList>
            <person name="van Ham R.C.H.J."/>
            <person name="Kamerbeek J."/>
            <person name="Palacios C."/>
            <person name="Rausell C."/>
            <person name="Abascal F."/>
            <person name="Bastolla U."/>
            <person name="Fernandez J.M."/>
            <person name="Jimenez L."/>
            <person name="Postigo M."/>
            <person name="Silva F.J."/>
            <person name="Tamames J."/>
            <person name="Viguera E."/>
            <person name="Latorre A."/>
            <person name="Valencia A."/>
            <person name="Moran F."/>
            <person name="Moya A."/>
        </authorList>
    </citation>
    <scope>NUCLEOTIDE SEQUENCE [LARGE SCALE GENOMIC DNA]</scope>
    <source>
        <strain>Bp</strain>
    </source>
</reference>
<dbReference type="EMBL" id="AE016826">
    <property type="protein sequence ID" value="AAO27190.1"/>
    <property type="molecule type" value="Genomic_DNA"/>
</dbReference>
<dbReference type="RefSeq" id="WP_011091591.1">
    <property type="nucleotide sequence ID" value="NC_004545.1"/>
</dbReference>
<dbReference type="SMR" id="Q89A56"/>
<dbReference type="STRING" id="224915.bbp_485"/>
<dbReference type="KEGG" id="bab:bbp_485"/>
<dbReference type="eggNOG" id="COG4108">
    <property type="taxonomic scope" value="Bacteria"/>
</dbReference>
<dbReference type="HOGENOM" id="CLU_002794_2_1_6"/>
<dbReference type="OrthoDB" id="9804431at2"/>
<dbReference type="Proteomes" id="UP000000601">
    <property type="component" value="Chromosome"/>
</dbReference>
<dbReference type="GO" id="GO:0005829">
    <property type="term" value="C:cytosol"/>
    <property type="evidence" value="ECO:0007669"/>
    <property type="project" value="TreeGrafter"/>
</dbReference>
<dbReference type="GO" id="GO:0005525">
    <property type="term" value="F:GTP binding"/>
    <property type="evidence" value="ECO:0007669"/>
    <property type="project" value="UniProtKB-UniRule"/>
</dbReference>
<dbReference type="GO" id="GO:0003924">
    <property type="term" value="F:GTPase activity"/>
    <property type="evidence" value="ECO:0007669"/>
    <property type="project" value="InterPro"/>
</dbReference>
<dbReference type="GO" id="GO:0097216">
    <property type="term" value="F:guanosine tetraphosphate binding"/>
    <property type="evidence" value="ECO:0007669"/>
    <property type="project" value="UniProtKB-ARBA"/>
</dbReference>
<dbReference type="GO" id="GO:0016150">
    <property type="term" value="F:translation release factor activity, codon nonspecific"/>
    <property type="evidence" value="ECO:0007669"/>
    <property type="project" value="TreeGrafter"/>
</dbReference>
<dbReference type="GO" id="GO:0016149">
    <property type="term" value="F:translation release factor activity, codon specific"/>
    <property type="evidence" value="ECO:0007669"/>
    <property type="project" value="UniProtKB-UniRule"/>
</dbReference>
<dbReference type="GO" id="GO:0006449">
    <property type="term" value="P:regulation of translational termination"/>
    <property type="evidence" value="ECO:0007669"/>
    <property type="project" value="UniProtKB-UniRule"/>
</dbReference>
<dbReference type="CDD" id="cd04169">
    <property type="entry name" value="RF3"/>
    <property type="match status" value="1"/>
</dbReference>
<dbReference type="FunFam" id="3.30.70.3280:FF:000001">
    <property type="entry name" value="Peptide chain release factor 3"/>
    <property type="match status" value="1"/>
</dbReference>
<dbReference type="FunFam" id="3.40.50.300:FF:000542">
    <property type="entry name" value="Peptide chain release factor 3"/>
    <property type="match status" value="1"/>
</dbReference>
<dbReference type="Gene3D" id="3.40.50.300">
    <property type="entry name" value="P-loop containing nucleotide triphosphate hydrolases"/>
    <property type="match status" value="1"/>
</dbReference>
<dbReference type="Gene3D" id="3.30.70.3280">
    <property type="entry name" value="Peptide chain release factor 3, domain III"/>
    <property type="match status" value="1"/>
</dbReference>
<dbReference type="Gene3D" id="2.40.30.10">
    <property type="entry name" value="Translation factors"/>
    <property type="match status" value="1"/>
</dbReference>
<dbReference type="HAMAP" id="MF_00072">
    <property type="entry name" value="Rel_fac_3"/>
    <property type="match status" value="1"/>
</dbReference>
<dbReference type="InterPro" id="IPR053905">
    <property type="entry name" value="EF-G-like_DII"/>
</dbReference>
<dbReference type="InterPro" id="IPR035647">
    <property type="entry name" value="EFG_III/V"/>
</dbReference>
<dbReference type="InterPro" id="IPR031157">
    <property type="entry name" value="G_TR_CS"/>
</dbReference>
<dbReference type="InterPro" id="IPR027417">
    <property type="entry name" value="P-loop_NTPase"/>
</dbReference>
<dbReference type="InterPro" id="IPR004548">
    <property type="entry name" value="PrfC"/>
</dbReference>
<dbReference type="InterPro" id="IPR032090">
    <property type="entry name" value="RF3_C"/>
</dbReference>
<dbReference type="InterPro" id="IPR038467">
    <property type="entry name" value="RF3_dom_3_sf"/>
</dbReference>
<dbReference type="InterPro" id="IPR041732">
    <property type="entry name" value="RF3_GTP-bd"/>
</dbReference>
<dbReference type="InterPro" id="IPR005225">
    <property type="entry name" value="Small_GTP-bd"/>
</dbReference>
<dbReference type="InterPro" id="IPR000795">
    <property type="entry name" value="T_Tr_GTP-bd_dom"/>
</dbReference>
<dbReference type="InterPro" id="IPR009000">
    <property type="entry name" value="Transl_B-barrel_sf"/>
</dbReference>
<dbReference type="NCBIfam" id="TIGR00503">
    <property type="entry name" value="prfC"/>
    <property type="match status" value="1"/>
</dbReference>
<dbReference type="NCBIfam" id="NF001964">
    <property type="entry name" value="PRK00741.1"/>
    <property type="match status" value="1"/>
</dbReference>
<dbReference type="NCBIfam" id="TIGR00231">
    <property type="entry name" value="small_GTP"/>
    <property type="match status" value="1"/>
</dbReference>
<dbReference type="PANTHER" id="PTHR43556">
    <property type="entry name" value="PEPTIDE CHAIN RELEASE FACTOR RF3"/>
    <property type="match status" value="1"/>
</dbReference>
<dbReference type="PANTHER" id="PTHR43556:SF2">
    <property type="entry name" value="PEPTIDE CHAIN RELEASE FACTOR RF3"/>
    <property type="match status" value="1"/>
</dbReference>
<dbReference type="Pfam" id="PF22042">
    <property type="entry name" value="EF-G_D2"/>
    <property type="match status" value="1"/>
</dbReference>
<dbReference type="Pfam" id="PF00009">
    <property type="entry name" value="GTP_EFTU"/>
    <property type="match status" value="1"/>
</dbReference>
<dbReference type="Pfam" id="PF16658">
    <property type="entry name" value="RF3_C"/>
    <property type="match status" value="1"/>
</dbReference>
<dbReference type="PRINTS" id="PR00315">
    <property type="entry name" value="ELONGATNFCT"/>
</dbReference>
<dbReference type="SUPFAM" id="SSF54980">
    <property type="entry name" value="EF-G C-terminal domain-like"/>
    <property type="match status" value="1"/>
</dbReference>
<dbReference type="SUPFAM" id="SSF52540">
    <property type="entry name" value="P-loop containing nucleoside triphosphate hydrolases"/>
    <property type="match status" value="1"/>
</dbReference>
<dbReference type="SUPFAM" id="SSF50447">
    <property type="entry name" value="Translation proteins"/>
    <property type="match status" value="1"/>
</dbReference>
<dbReference type="PROSITE" id="PS00301">
    <property type="entry name" value="G_TR_1"/>
    <property type="match status" value="1"/>
</dbReference>
<dbReference type="PROSITE" id="PS51722">
    <property type="entry name" value="G_TR_2"/>
    <property type="match status" value="1"/>
</dbReference>
<gene>
    <name type="primary">prfC</name>
    <name type="ordered locus">bbp_485</name>
</gene>
<name>RF3_BUCBP</name>
<keyword id="KW-0963">Cytoplasm</keyword>
<keyword id="KW-0342">GTP-binding</keyword>
<keyword id="KW-0547">Nucleotide-binding</keyword>
<keyword id="KW-0648">Protein biosynthesis</keyword>
<keyword id="KW-1185">Reference proteome</keyword>
<sequence length="532" mass="61531">MITINTYALQKRRTFAIISHPDAGKTTLTEKFLLNGKIIRTSGTIKARRSKKYAKSDWMEIEKKKGISITTSVIQIPYNRYLINILDTPGHQDFSEDTYRVLTAVDFCVMIVDAAKGVEERTRKLIHVARTHRTPIITFINKLDRNSLDPIEILDQLEIELKIKCSPIIWPISCGKAFKGIYHIYNNLVYFYSYKTSEGINDTNNFLLKTCCLNDVFLDKIIGLELAQEFREEVELVNSIYKAFNKRIFLESDLTPIFFGSALKNFGVNFLMQGILDWAPSPVFKKSNIRKVQPYEKNFSGFVFKIQANMDLRHRDRMAFIRIVSGKYRKRMKLYHVRIKKYIIQTEVFSFVAGDRFIIETAYPGDIIGFHSYNSIKIGDTFTEGEKLKFFGIPNFAPELFRLVSLVDPFHKKKLLKGLTQLSEEGAIQVFKPYENNELILGAIGSLQFDIVIERLKIEYNIFILVHKVNIFSIRWISSNSLDTLSTFKNQNKSCLALDINNHLVYLASSEINLRLVQSRYPDIIFNVTCEN</sequence>
<accession>Q89A56</accession>
<feature type="chain" id="PRO_0000210935" description="Peptide chain release factor 3">
    <location>
        <begin position="1"/>
        <end position="532"/>
    </location>
</feature>
<feature type="domain" description="tr-type G">
    <location>
        <begin position="10"/>
        <end position="283"/>
    </location>
</feature>
<feature type="binding site" evidence="1">
    <location>
        <begin position="19"/>
        <end position="26"/>
    </location>
    <ligand>
        <name>GTP</name>
        <dbReference type="ChEBI" id="CHEBI:37565"/>
    </ligand>
</feature>
<feature type="binding site" evidence="1">
    <location>
        <begin position="87"/>
        <end position="91"/>
    </location>
    <ligand>
        <name>GTP</name>
        <dbReference type="ChEBI" id="CHEBI:37565"/>
    </ligand>
</feature>
<feature type="binding site" evidence="1">
    <location>
        <begin position="141"/>
        <end position="144"/>
    </location>
    <ligand>
        <name>GTP</name>
        <dbReference type="ChEBI" id="CHEBI:37565"/>
    </ligand>
</feature>
<protein>
    <recommendedName>
        <fullName>Peptide chain release factor 3</fullName>
        <shortName>RF-3</shortName>
    </recommendedName>
</protein>
<organism>
    <name type="scientific">Buchnera aphidicola subsp. Baizongia pistaciae (strain Bp)</name>
    <dbReference type="NCBI Taxonomy" id="224915"/>
    <lineage>
        <taxon>Bacteria</taxon>
        <taxon>Pseudomonadati</taxon>
        <taxon>Pseudomonadota</taxon>
        <taxon>Gammaproteobacteria</taxon>
        <taxon>Enterobacterales</taxon>
        <taxon>Erwiniaceae</taxon>
        <taxon>Buchnera</taxon>
    </lineage>
</organism>
<comment type="function">
    <text evidence="1">Increases the formation of ribosomal termination complexes and stimulates activities of RF-1 and RF-2. It binds guanine nucleotides and has strong preference for UGA stop codons. It may interact directly with the ribosome. The stimulation of RF-1 and RF-2 is significantly reduced by GTP and GDP, but not by GMP (By similarity).</text>
</comment>
<comment type="subcellular location">
    <subcellularLocation>
        <location evidence="1">Cytoplasm</location>
    </subcellularLocation>
</comment>
<comment type="similarity">
    <text evidence="2">Belongs to the TRAFAC class translation factor GTPase superfamily. Classic translation factor GTPase family. PrfC subfamily.</text>
</comment>
<proteinExistence type="inferred from homology"/>
<evidence type="ECO:0000250" key="1"/>
<evidence type="ECO:0000305" key="2"/>